<dbReference type="EC" id="6.3.5.1" evidence="3"/>
<dbReference type="EMBL" id="AB090805">
    <property type="protein sequence ID" value="BAC57897.1"/>
    <property type="molecule type" value="mRNA"/>
</dbReference>
<dbReference type="RefSeq" id="NP_852145.1">
    <property type="nucleotide sequence ID" value="NM_181480.1"/>
</dbReference>
<dbReference type="SMR" id="Q812E8"/>
<dbReference type="BioGRID" id="261873">
    <property type="interactions" value="1"/>
</dbReference>
<dbReference type="FunCoup" id="Q812E8">
    <property type="interactions" value="1485"/>
</dbReference>
<dbReference type="STRING" id="10116.ENSRNOP00000028175"/>
<dbReference type="PhosphoSitePlus" id="Q812E8"/>
<dbReference type="jPOST" id="Q812E8"/>
<dbReference type="PaxDb" id="10116-ENSRNOP00000028175"/>
<dbReference type="GeneID" id="353255"/>
<dbReference type="KEGG" id="rno:353255"/>
<dbReference type="UCSC" id="RGD:727801">
    <property type="organism name" value="rat"/>
</dbReference>
<dbReference type="AGR" id="RGD:727801"/>
<dbReference type="CTD" id="55191"/>
<dbReference type="RGD" id="727801">
    <property type="gene designation" value="Nadsyn1"/>
</dbReference>
<dbReference type="eggNOG" id="KOG2303">
    <property type="taxonomic scope" value="Eukaryota"/>
</dbReference>
<dbReference type="InParanoid" id="Q812E8"/>
<dbReference type="PhylomeDB" id="Q812E8"/>
<dbReference type="Reactome" id="R-RNO-196807">
    <property type="pathway name" value="Nicotinate metabolism"/>
</dbReference>
<dbReference type="UniPathway" id="UPA00253">
    <property type="reaction ID" value="UER00334"/>
</dbReference>
<dbReference type="PRO" id="PR:Q812E8"/>
<dbReference type="Proteomes" id="UP000002494">
    <property type="component" value="Unplaced"/>
</dbReference>
<dbReference type="GO" id="GO:0005737">
    <property type="term" value="C:cytoplasm"/>
    <property type="evidence" value="ECO:0000318"/>
    <property type="project" value="GO_Central"/>
</dbReference>
<dbReference type="GO" id="GO:0005524">
    <property type="term" value="F:ATP binding"/>
    <property type="evidence" value="ECO:0007669"/>
    <property type="project" value="UniProtKB-KW"/>
</dbReference>
<dbReference type="GO" id="GO:0004359">
    <property type="term" value="F:glutaminase activity"/>
    <property type="evidence" value="ECO:0000318"/>
    <property type="project" value="GO_Central"/>
</dbReference>
<dbReference type="GO" id="GO:0003952">
    <property type="term" value="F:NAD+ synthase (glutamine-hydrolyzing) activity"/>
    <property type="evidence" value="ECO:0000250"/>
    <property type="project" value="UniProtKB"/>
</dbReference>
<dbReference type="GO" id="GO:0034354">
    <property type="term" value="P:'de novo' NAD biosynthetic process from L-tryptophan"/>
    <property type="evidence" value="ECO:0000250"/>
    <property type="project" value="UniProtKB"/>
</dbReference>
<dbReference type="GO" id="GO:0009435">
    <property type="term" value="P:NAD biosynthetic process"/>
    <property type="evidence" value="ECO:0000318"/>
    <property type="project" value="GO_Central"/>
</dbReference>
<dbReference type="CDD" id="cd07570">
    <property type="entry name" value="GAT_Gln-NAD-synth"/>
    <property type="match status" value="1"/>
</dbReference>
<dbReference type="CDD" id="cd00553">
    <property type="entry name" value="NAD_synthase"/>
    <property type="match status" value="1"/>
</dbReference>
<dbReference type="FunFam" id="3.40.50.620:FF:000036">
    <property type="entry name" value="Glutamine-dependent NAD(+) synthetase"/>
    <property type="match status" value="1"/>
</dbReference>
<dbReference type="FunFam" id="3.60.110.10:FF:000007">
    <property type="entry name" value="Glutamine-dependent NAD(+) synthetase"/>
    <property type="match status" value="1"/>
</dbReference>
<dbReference type="Gene3D" id="3.60.110.10">
    <property type="entry name" value="Carbon-nitrogen hydrolase"/>
    <property type="match status" value="1"/>
</dbReference>
<dbReference type="Gene3D" id="3.40.50.620">
    <property type="entry name" value="HUPs"/>
    <property type="match status" value="1"/>
</dbReference>
<dbReference type="HAMAP" id="MF_02090">
    <property type="entry name" value="NadE_glutamine_dep"/>
    <property type="match status" value="1"/>
</dbReference>
<dbReference type="InterPro" id="IPR003010">
    <property type="entry name" value="C-N_Hydrolase"/>
</dbReference>
<dbReference type="InterPro" id="IPR036526">
    <property type="entry name" value="C-N_Hydrolase_sf"/>
</dbReference>
<dbReference type="InterPro" id="IPR014445">
    <property type="entry name" value="Gln-dep_NAD_synthase"/>
</dbReference>
<dbReference type="InterPro" id="IPR022310">
    <property type="entry name" value="NAD/GMP_synthase"/>
</dbReference>
<dbReference type="InterPro" id="IPR003694">
    <property type="entry name" value="NAD_synthase"/>
</dbReference>
<dbReference type="InterPro" id="IPR014729">
    <property type="entry name" value="Rossmann-like_a/b/a_fold"/>
</dbReference>
<dbReference type="NCBIfam" id="TIGR00552">
    <property type="entry name" value="nadE"/>
    <property type="match status" value="1"/>
</dbReference>
<dbReference type="PANTHER" id="PTHR23090:SF9">
    <property type="entry name" value="GLUTAMINE-DEPENDENT NAD(+) SYNTHETASE"/>
    <property type="match status" value="1"/>
</dbReference>
<dbReference type="PANTHER" id="PTHR23090">
    <property type="entry name" value="NH 3 /GLUTAMINE-DEPENDENT NAD + SYNTHETASE"/>
    <property type="match status" value="1"/>
</dbReference>
<dbReference type="Pfam" id="PF00795">
    <property type="entry name" value="CN_hydrolase"/>
    <property type="match status" value="1"/>
</dbReference>
<dbReference type="Pfam" id="PF02540">
    <property type="entry name" value="NAD_synthase"/>
    <property type="match status" value="1"/>
</dbReference>
<dbReference type="PIRSF" id="PIRSF006630">
    <property type="entry name" value="NADS_GAT"/>
    <property type="match status" value="1"/>
</dbReference>
<dbReference type="SUPFAM" id="SSF52402">
    <property type="entry name" value="Adenine nucleotide alpha hydrolases-like"/>
    <property type="match status" value="1"/>
</dbReference>
<dbReference type="SUPFAM" id="SSF56317">
    <property type="entry name" value="Carbon-nitrogen hydrolase"/>
    <property type="match status" value="1"/>
</dbReference>
<dbReference type="PROSITE" id="PS50263">
    <property type="entry name" value="CN_HYDROLASE"/>
    <property type="match status" value="1"/>
</dbReference>
<gene>
    <name type="primary">Nadsyn1</name>
    <name type="synonym">Qns1</name>
</gene>
<organism>
    <name type="scientific">Rattus norvegicus</name>
    <name type="common">Rat</name>
    <dbReference type="NCBI Taxonomy" id="10116"/>
    <lineage>
        <taxon>Eukaryota</taxon>
        <taxon>Metazoa</taxon>
        <taxon>Chordata</taxon>
        <taxon>Craniata</taxon>
        <taxon>Vertebrata</taxon>
        <taxon>Euteleostomi</taxon>
        <taxon>Mammalia</taxon>
        <taxon>Eutheria</taxon>
        <taxon>Euarchontoglires</taxon>
        <taxon>Glires</taxon>
        <taxon>Rodentia</taxon>
        <taxon>Myomorpha</taxon>
        <taxon>Muroidea</taxon>
        <taxon>Muridae</taxon>
        <taxon>Murinae</taxon>
        <taxon>Rattus</taxon>
    </lineage>
</organism>
<proteinExistence type="evidence at transcript level"/>
<protein>
    <recommendedName>
        <fullName>Glutamine-dependent NAD(+) synthetase</fullName>
        <ecNumber evidence="3">6.3.5.1</ecNumber>
    </recommendedName>
    <alternativeName>
        <fullName>NAD(+) synthase [glutamine-hydrolyzing]</fullName>
    </alternativeName>
    <alternativeName>
        <fullName>NAD(+) synthetase</fullName>
    </alternativeName>
</protein>
<reference key="1">
    <citation type="submission" date="2002-08" db="EMBL/GenBank/DDBJ databases">
        <title>Rat NAD+ synthetase.</title>
        <authorList>
            <person name="Miura Y."/>
            <person name="Yamashita N."/>
            <person name="Suda Y."/>
        </authorList>
    </citation>
    <scope>NUCLEOTIDE SEQUENCE [MRNA]</scope>
</reference>
<comment type="function">
    <text evidence="3">Catalyzes the final step of the nicotinamide adenine dinucleotide (NAD) de novo synthesis pathway, the ATP-dependent amidation of deamido-NAD using L-glutamine as a nitrogen source.</text>
</comment>
<comment type="catalytic activity">
    <reaction evidence="3">
        <text>deamido-NAD(+) + L-glutamine + ATP + H2O = L-glutamate + AMP + diphosphate + NAD(+) + H(+)</text>
        <dbReference type="Rhea" id="RHEA:24384"/>
        <dbReference type="ChEBI" id="CHEBI:15377"/>
        <dbReference type="ChEBI" id="CHEBI:15378"/>
        <dbReference type="ChEBI" id="CHEBI:29985"/>
        <dbReference type="ChEBI" id="CHEBI:30616"/>
        <dbReference type="ChEBI" id="CHEBI:33019"/>
        <dbReference type="ChEBI" id="CHEBI:57540"/>
        <dbReference type="ChEBI" id="CHEBI:58359"/>
        <dbReference type="ChEBI" id="CHEBI:58437"/>
        <dbReference type="ChEBI" id="CHEBI:456215"/>
        <dbReference type="EC" id="6.3.5.1"/>
    </reaction>
    <physiologicalReaction direction="left-to-right" evidence="3">
        <dbReference type="Rhea" id="RHEA:24385"/>
    </physiologicalReaction>
</comment>
<comment type="pathway">
    <text evidence="3">Cofactor biosynthesis; NAD(+) biosynthesis; NAD(+) from deamido-NAD(+) (L-Gln route): step 1/1.</text>
</comment>
<comment type="subunit">
    <text evidence="3">Homohexamer.</text>
</comment>
<comment type="similarity">
    <text evidence="5">In the C-terminal section; belongs to the NAD synthetase family.</text>
</comment>
<feature type="chain" id="PRO_0000237580" description="Glutamine-dependent NAD(+) synthetase">
    <location>
        <begin position="1"/>
        <end position="725"/>
    </location>
</feature>
<feature type="domain" description="CN hydrolase" evidence="4">
    <location>
        <begin position="5"/>
        <end position="275"/>
    </location>
</feature>
<feature type="region of interest" description="Ligase" evidence="1">
    <location>
        <begin position="325"/>
        <end position="706"/>
    </location>
</feature>
<feature type="active site" description="Proton acceptor; for glutaminase activity" evidence="2">
    <location>
        <position position="45"/>
    </location>
</feature>
<feature type="active site" description="For glutaminase activity" evidence="2">
    <location>
        <position position="114"/>
    </location>
</feature>
<feature type="active site" description="Nucleophile; for glutaminase activity" evidence="2">
    <location>
        <position position="175"/>
    </location>
</feature>
<feature type="active site" evidence="1">
    <location>
        <position position="357"/>
    </location>
</feature>
<feature type="binding site" evidence="1">
    <location>
        <begin position="355"/>
        <end position="362"/>
    </location>
    <ligand>
        <name>ATP</name>
        <dbReference type="ChEBI" id="CHEBI:30616"/>
    </ligand>
</feature>
<keyword id="KW-0067">ATP-binding</keyword>
<keyword id="KW-0436">Ligase</keyword>
<keyword id="KW-0520">NAD</keyword>
<keyword id="KW-0547">Nucleotide-binding</keyword>
<keyword id="KW-1185">Reference proteome</keyword>
<accession>Q812E8</accession>
<sequence>MGRKVTVATCALNQWALDFEGNFQRILKSIQIAKGKGARYRLGPELEICGYGCWDHYHESDTLLHSLQVLAALLDAPATQDIICDVGMPIMHRNVRYNCLVIFLNRKILLIRPKMALANEGNYRELRWFTPWARSRQTEEYVLPRMLQDLTKQETVPFGDVVLATQDTCIGSEICEELWTPCSPHVNMGLDGVEIITNASGSHHVLRKAHTRVDLVTMATSKNGGIYLLANQKGCDGHLLYYDGCAMIAMNGSIFAQGTQFSLDDVEVLTATLDLEDVRSYRAKISSRNLEATRVNPYPRVTVDFALSVSEDLLEPVSEPVEWTYHRPEEEISLGPACWLWDFLRRNNQAGFFLPLSGGVDSAASACVVYSMCCLVCEAVKSGNQQVLTDVQNLVDESSYTPQDPRELCGRLLTTCYMASENSSQETHNRATELAQQIGSYHISLNIDPAVKAILGIFSLVTGKFPRFSAHGGSSRENLALQNVQARIRMVLAYLFAQLSLWSRGARGSLLVLGSANVDESLLGYLTKYDCSSADINPIGGISKTDLRAFVQLCAERFQLPVLQAILSAPATAELEPLADGQVSQMDEEDMGMTYTELSIFGRLRKVAKAGPYSMFCKLLNMWKDSCTPRQVAEKVKRFFSKYSINRHKMTTLTPAYHAENYSPDDNRFDLRPFLYNTRWPWQFLCIDNQVVQLERKTSQTLEEQIQEHFKEPSPIWKQLLPKDP</sequence>
<name>NADE_RAT</name>
<evidence type="ECO:0000250" key="1"/>
<evidence type="ECO:0000250" key="2">
    <source>
        <dbReference type="UniProtKB" id="P9WJJ3"/>
    </source>
</evidence>
<evidence type="ECO:0000250" key="3">
    <source>
        <dbReference type="UniProtKB" id="Q6IA69"/>
    </source>
</evidence>
<evidence type="ECO:0000255" key="4">
    <source>
        <dbReference type="PROSITE-ProRule" id="PRU00054"/>
    </source>
</evidence>
<evidence type="ECO:0000305" key="5"/>